<organism>
    <name type="scientific">Cavia porcellus</name>
    <name type="common">Guinea pig</name>
    <dbReference type="NCBI Taxonomy" id="10141"/>
    <lineage>
        <taxon>Eukaryota</taxon>
        <taxon>Metazoa</taxon>
        <taxon>Chordata</taxon>
        <taxon>Craniata</taxon>
        <taxon>Vertebrata</taxon>
        <taxon>Euteleostomi</taxon>
        <taxon>Mammalia</taxon>
        <taxon>Eutheria</taxon>
        <taxon>Euarchontoglires</taxon>
        <taxon>Glires</taxon>
        <taxon>Rodentia</taxon>
        <taxon>Hystricomorpha</taxon>
        <taxon>Caviidae</taxon>
        <taxon>Cavia</taxon>
    </lineage>
</organism>
<comment type="function">
    <molecule>Vasoactive intestinal peptide</molecule>
    <text evidence="1">VIP is a neuropeptide involved in a diverse array of physiological processes through activating the PACAP subfamily of class B1 G protein-coupled receptors: VIP receptor 1 (VPR1) and VIP receptor 2 (VPR2). Abundantly expressed throughout the CNS and peripheral nervous systems where they primarily exert neuroprotective and immune modulatory roles (By similarity). Also causes vasodilation, lowers arterial blood pressure, stimulates myocardial contractility, increases glycogenolysis and relaxes the smooth muscle of trachea, stomach and gall bladder (By similarity).</text>
</comment>
<comment type="function">
    <molecule>Intestinal peptide PHI-27</molecule>
    <text evidence="1">PHM-27 is a bioactive form from proteolysis of the same precursor protein, that causes vasodilation. It is a potent agonist of the calcitonin receptor CALCR, with similar efficacy as calcitonin.</text>
</comment>
<comment type="subcellular location">
    <subcellularLocation>
        <location>Secreted</location>
    </subcellularLocation>
</comment>
<comment type="miscellaneous">
    <text>X's at positions 28 to 44 were included by homology with the human precursor sequence.</text>
</comment>
<comment type="similarity">
    <text evidence="4">Belongs to the glucagon family.</text>
</comment>
<feature type="peptide" id="PRO_0000011455" description="Intestinal peptide PHI-27">
    <location>
        <begin position="1"/>
        <end position="27"/>
    </location>
</feature>
<feature type="peptide" id="PRO_0000011456" description="Vasoactive intestinal peptide">
    <location>
        <begin position="45"/>
        <end position="72"/>
    </location>
</feature>
<feature type="modified residue" description="Isoleucine amide" evidence="2">
    <location>
        <position position="27"/>
    </location>
</feature>
<feature type="modified residue" description="Asparagine amide" evidence="2 3">
    <location>
        <position position="72"/>
    </location>
</feature>
<feature type="non-terminal residue">
    <location>
        <position position="1"/>
    </location>
</feature>
<feature type="non-terminal residue">
    <location>
        <position position="72"/>
    </location>
</feature>
<protein>
    <recommendedName>
        <fullName>VIP peptides</fullName>
    </recommendedName>
    <component>
        <recommendedName>
            <fullName>Intestinal peptide PHI-27</fullName>
        </recommendedName>
        <alternativeName>
            <fullName>Peptide histidine isoleucinamide 27</fullName>
        </alternativeName>
    </component>
    <component>
        <recommendedName>
            <fullName>Vasoactive intestinal peptide</fullName>
            <shortName>VIP</shortName>
        </recommendedName>
        <alternativeName>
            <fullName>Vasoactive intestinal polypeptide</fullName>
        </alternativeName>
    </component>
</protein>
<accession>P04566</accession>
<proteinExistence type="evidence at protein level"/>
<sequence length="72" mass="8261">HADGVFTSDYSRLLGQLSARKYLESLIXXXXXXXXXXXXXXXXXHSDALFTDTYTRLRKQMAMKKYLNSVLN</sequence>
<name>VIP_CAVPO</name>
<evidence type="ECO:0000250" key="1">
    <source>
        <dbReference type="UniProtKB" id="P01282"/>
    </source>
</evidence>
<evidence type="ECO:0000269" key="2">
    <source>
    </source>
</evidence>
<evidence type="ECO:0000269" key="3">
    <source>
    </source>
</evidence>
<evidence type="ECO:0000305" key="4"/>
<reference key="1">
    <citation type="journal article" date="1990" name="Biochim. Biophys. Acta">
        <title>Purification and amino acid sequence of vasoactive intestinal peptide, peptide histidine isoleucinamide (1-27) and secretin from the small intestine of guinea pig.</title>
        <authorList>
            <person name="Buscail L."/>
            <person name="Cauvin A."/>
            <person name="Gourlet P."/>
            <person name="Gossen D."/>
            <person name="de Neef P."/>
            <person name="Rathe J."/>
            <person name="Robberecht P."/>
            <person name="Vandermeers-Piret M.-C."/>
            <person name="Vandermeers A."/>
            <person name="Christophe J."/>
        </authorList>
    </citation>
    <scope>PROTEIN SEQUENCE OF 1-27 AND 45-72</scope>
    <scope>AMIDATION AT ILE-27 AND ASN-72</scope>
</reference>
<reference key="2">
    <citation type="journal article" date="1986" name="Peptides 7 Suppl.">
        <title>Purification and amino acid sequences of dog, goat and guinea pig VIPs.</title>
        <authorList>
            <person name="Eng J."/>
            <person name="Du B.-H."/>
            <person name="Raufman J.-P."/>
            <person name="Yalow R.S."/>
        </authorList>
    </citation>
    <scope>PROTEIN SEQUENCE OF 45-72</scope>
</reference>
<reference key="3">
    <citation type="journal article" date="1985" name="Biochem. Biophys. Res. Commun.">
        <title>Guinea pig has a unique mammalian VIP.</title>
        <authorList>
            <person name="Du B.-H."/>
            <person name="Eng J."/>
            <person name="Hulmes J.D."/>
            <person name="Chang M."/>
            <person name="Pan Y.-C.E."/>
            <person name="Yalow R.S."/>
        </authorList>
    </citation>
    <scope>PROTEIN SEQUENCE OF 45-72</scope>
    <scope>AMIDATION AT ASN-72</scope>
</reference>
<keyword id="KW-0027">Amidation</keyword>
<keyword id="KW-0165">Cleavage on pair of basic residues</keyword>
<keyword id="KW-0903">Direct protein sequencing</keyword>
<keyword id="KW-0372">Hormone</keyword>
<keyword id="KW-1185">Reference proteome</keyword>
<keyword id="KW-0964">Secreted</keyword>
<gene>
    <name type="primary">VIP</name>
</gene>
<dbReference type="PIR" id="A26175">
    <property type="entry name" value="VRGP"/>
</dbReference>
<dbReference type="STRING" id="10141.ENSCPOP00000002714"/>
<dbReference type="BindingDB" id="P04566"/>
<dbReference type="InParanoid" id="P04566"/>
<dbReference type="Proteomes" id="UP000005447">
    <property type="component" value="Unassembled WGS sequence"/>
</dbReference>
<dbReference type="GO" id="GO:0005576">
    <property type="term" value="C:extracellular region"/>
    <property type="evidence" value="ECO:0007669"/>
    <property type="project" value="UniProtKB-SubCell"/>
</dbReference>
<dbReference type="GO" id="GO:0043005">
    <property type="term" value="C:neuron projection"/>
    <property type="evidence" value="ECO:0007669"/>
    <property type="project" value="TreeGrafter"/>
</dbReference>
<dbReference type="GO" id="GO:0005184">
    <property type="term" value="F:neuropeptide hormone activity"/>
    <property type="evidence" value="ECO:0000250"/>
    <property type="project" value="UniProtKB"/>
</dbReference>
<dbReference type="GO" id="GO:0051428">
    <property type="term" value="F:peptide hormone receptor binding"/>
    <property type="evidence" value="ECO:0007669"/>
    <property type="project" value="TreeGrafter"/>
</dbReference>
<dbReference type="GO" id="GO:0031891">
    <property type="term" value="F:type 1 vasoactive intestinal polypeptide receptor binding"/>
    <property type="evidence" value="ECO:0000250"/>
    <property type="project" value="UniProtKB"/>
</dbReference>
<dbReference type="GO" id="GO:0007189">
    <property type="term" value="P:adenylate cyclase-activating G protein-coupled receptor signaling pathway"/>
    <property type="evidence" value="ECO:0000250"/>
    <property type="project" value="UniProtKB"/>
</dbReference>
<dbReference type="GO" id="GO:0048242">
    <property type="term" value="P:epinephrine secretion"/>
    <property type="evidence" value="ECO:0007669"/>
    <property type="project" value="TreeGrafter"/>
</dbReference>
<dbReference type="GO" id="GO:0045732">
    <property type="term" value="P:positive regulation of protein catabolic process"/>
    <property type="evidence" value="ECO:0007669"/>
    <property type="project" value="UniProtKB-ARBA"/>
</dbReference>
<dbReference type="GO" id="GO:0032880">
    <property type="term" value="P:regulation of protein localization"/>
    <property type="evidence" value="ECO:0007669"/>
    <property type="project" value="UniProtKB-ARBA"/>
</dbReference>
<dbReference type="Gene3D" id="6.10.250.590">
    <property type="match status" value="1"/>
</dbReference>
<dbReference type="InterPro" id="IPR000532">
    <property type="entry name" value="Glucagon_GIP_secretin_VIP"/>
</dbReference>
<dbReference type="InterPro" id="IPR046963">
    <property type="entry name" value="VIP/GHRH-like"/>
</dbReference>
<dbReference type="PANTHER" id="PTHR11213">
    <property type="entry name" value="GLUCAGON-FAMILY NEUROPEPTIDE"/>
    <property type="match status" value="1"/>
</dbReference>
<dbReference type="PANTHER" id="PTHR11213:SF5">
    <property type="entry name" value="VIP PEPTIDES"/>
    <property type="match status" value="1"/>
</dbReference>
<dbReference type="Pfam" id="PF00123">
    <property type="entry name" value="Hormone_2"/>
    <property type="match status" value="2"/>
</dbReference>
<dbReference type="PRINTS" id="PR00275">
    <property type="entry name" value="GLUCAGON"/>
</dbReference>
<dbReference type="SMART" id="SM00070">
    <property type="entry name" value="GLUCA"/>
    <property type="match status" value="2"/>
</dbReference>
<dbReference type="PROSITE" id="PS00260">
    <property type="entry name" value="GLUCAGON"/>
    <property type="match status" value="2"/>
</dbReference>